<comment type="function">
    <text evidence="5">Hypertrehalosaemic factors are neuropeptides that elevate the level of trehalose in the hemolymph (trehalose is the major carbohydrate in the hemolymph of insects).</text>
</comment>
<comment type="subcellular location">
    <subcellularLocation>
        <location evidence="5">Secreted</location>
    </subcellularLocation>
</comment>
<comment type="similarity">
    <text evidence="2">Belongs to the AKH/HRTH/RPCH family.</text>
</comment>
<evidence type="ECO:0000250" key="1">
    <source>
        <dbReference type="UniProtKB" id="P67790"/>
    </source>
</evidence>
<evidence type="ECO:0000255" key="2"/>
<evidence type="ECO:0000269" key="3">
    <source>
    </source>
</evidence>
<evidence type="ECO:0000303" key="4">
    <source>
    </source>
</evidence>
<evidence type="ECO:0000305" key="5"/>
<accession>P85585</accession>
<keyword id="KW-0027">Amidation</keyword>
<keyword id="KW-0903">Direct protein sequencing</keyword>
<keyword id="KW-0372">Hormone</keyword>
<keyword id="KW-0527">Neuropeptide</keyword>
<keyword id="KW-0873">Pyrrolidone carboxylic acid</keyword>
<keyword id="KW-0964">Secreted</keyword>
<protein>
    <recommendedName>
        <fullName evidence="1">Hypertrehalosaemic factor</fullName>
    </recommendedName>
    <alternativeName>
        <fullName evidence="4">Adipokinetic hormone 1</fullName>
        <shortName evidence="4">DerEr-AKH-1</shortName>
    </alternativeName>
    <alternativeName>
        <fullName evidence="1">Hypertrehalosaemic neuropeptide</fullName>
    </alternativeName>
</protein>
<name>HTF_DERER</name>
<organism>
    <name type="scientific">Deropeltis erythrocephala</name>
    <name type="common">Black velvet roach</name>
    <dbReference type="NCBI Taxonomy" id="303918"/>
    <lineage>
        <taxon>Eukaryota</taxon>
        <taxon>Metazoa</taxon>
        <taxon>Ecdysozoa</taxon>
        <taxon>Arthropoda</taxon>
        <taxon>Hexapoda</taxon>
        <taxon>Insecta</taxon>
        <taxon>Pterygota</taxon>
        <taxon>Neoptera</taxon>
        <taxon>Polyneoptera</taxon>
        <taxon>Dictyoptera</taxon>
        <taxon>Blattodea</taxon>
        <taxon>Blattoidea</taxon>
        <taxon>Blattidae</taxon>
        <taxon>Blattinae</taxon>
        <taxon>Deropeltis</taxon>
    </lineage>
</organism>
<proteinExistence type="evidence at protein level"/>
<reference evidence="5" key="1">
    <citation type="journal article" date="2009" name="BMC Evol. Biol.">
        <title>A proteomic approach for studying insect phylogeny: CAPA peptides of ancient insect taxa (Dictyoptera, Blattoptera) as a test case.</title>
        <authorList>
            <person name="Roth S."/>
            <person name="Fromm B."/>
            <person name="Gaede G."/>
            <person name="Predel R."/>
        </authorList>
    </citation>
    <scope>PROTEIN SEQUENCE</scope>
    <scope>PYROGLUTAMATE FORMATION AT GLN-1</scope>
    <scope>AMIDATION AT TRP-8</scope>
    <source>
        <tissue evidence="3">Corpora cardiaca</tissue>
    </source>
</reference>
<dbReference type="GO" id="GO:0005576">
    <property type="term" value="C:extracellular region"/>
    <property type="evidence" value="ECO:0007669"/>
    <property type="project" value="UniProtKB-SubCell"/>
</dbReference>
<dbReference type="GO" id="GO:0005179">
    <property type="term" value="F:hormone activity"/>
    <property type="evidence" value="ECO:0007669"/>
    <property type="project" value="UniProtKB-KW"/>
</dbReference>
<dbReference type="GO" id="GO:0007218">
    <property type="term" value="P:neuropeptide signaling pathway"/>
    <property type="evidence" value="ECO:0007669"/>
    <property type="project" value="UniProtKB-KW"/>
</dbReference>
<dbReference type="InterPro" id="IPR002047">
    <property type="entry name" value="Adipokinetic_hormone_CS"/>
</dbReference>
<dbReference type="PROSITE" id="PS00256">
    <property type="entry name" value="AKH"/>
    <property type="match status" value="1"/>
</dbReference>
<feature type="peptide" id="PRO_0000378641" description="Hypertrehalosaemic factor" evidence="3">
    <location>
        <begin position="1"/>
        <end position="8"/>
    </location>
</feature>
<feature type="modified residue" description="Pyrrolidone carboxylic acid" evidence="3">
    <location>
        <position position="1"/>
    </location>
</feature>
<feature type="modified residue" description="Tryptophan amide" evidence="3">
    <location>
        <position position="8"/>
    </location>
</feature>
<sequence>QVNFSPNW</sequence>